<evidence type="ECO:0000255" key="1">
    <source>
        <dbReference type="HAMAP-Rule" id="MF_00191"/>
    </source>
</evidence>
<organism>
    <name type="scientific">Helicobacter hepaticus (strain ATCC 51449 / 3B1)</name>
    <dbReference type="NCBI Taxonomy" id="235279"/>
    <lineage>
        <taxon>Bacteria</taxon>
        <taxon>Pseudomonadati</taxon>
        <taxon>Campylobacterota</taxon>
        <taxon>Epsilonproteobacteria</taxon>
        <taxon>Campylobacterales</taxon>
        <taxon>Helicobacteraceae</taxon>
        <taxon>Helicobacter</taxon>
    </lineage>
</organism>
<dbReference type="EC" id="1.17.7.4" evidence="1"/>
<dbReference type="EMBL" id="AE017125">
    <property type="protein sequence ID" value="AAP76735.1"/>
    <property type="molecule type" value="Genomic_DNA"/>
</dbReference>
<dbReference type="RefSeq" id="WP_011114981.1">
    <property type="nucleotide sequence ID" value="NC_004917.1"/>
</dbReference>
<dbReference type="SMR" id="Q7VJV5"/>
<dbReference type="STRING" id="235279.HH_0138"/>
<dbReference type="KEGG" id="hhe:HH_0138"/>
<dbReference type="eggNOG" id="COG0761">
    <property type="taxonomic scope" value="Bacteria"/>
</dbReference>
<dbReference type="HOGENOM" id="CLU_027486_0_1_7"/>
<dbReference type="OrthoDB" id="9804068at2"/>
<dbReference type="UniPathway" id="UPA00056">
    <property type="reaction ID" value="UER00097"/>
</dbReference>
<dbReference type="UniPathway" id="UPA00059">
    <property type="reaction ID" value="UER00105"/>
</dbReference>
<dbReference type="Proteomes" id="UP000002495">
    <property type="component" value="Chromosome"/>
</dbReference>
<dbReference type="GO" id="GO:0051539">
    <property type="term" value="F:4 iron, 4 sulfur cluster binding"/>
    <property type="evidence" value="ECO:0007669"/>
    <property type="project" value="UniProtKB-UniRule"/>
</dbReference>
<dbReference type="GO" id="GO:0051745">
    <property type="term" value="F:4-hydroxy-3-methylbut-2-enyl diphosphate reductase activity"/>
    <property type="evidence" value="ECO:0007669"/>
    <property type="project" value="UniProtKB-UniRule"/>
</dbReference>
<dbReference type="GO" id="GO:0046872">
    <property type="term" value="F:metal ion binding"/>
    <property type="evidence" value="ECO:0007669"/>
    <property type="project" value="UniProtKB-KW"/>
</dbReference>
<dbReference type="GO" id="GO:0050992">
    <property type="term" value="P:dimethylallyl diphosphate biosynthetic process"/>
    <property type="evidence" value="ECO:0007669"/>
    <property type="project" value="UniProtKB-UniRule"/>
</dbReference>
<dbReference type="GO" id="GO:0019288">
    <property type="term" value="P:isopentenyl diphosphate biosynthetic process, methylerythritol 4-phosphate pathway"/>
    <property type="evidence" value="ECO:0007669"/>
    <property type="project" value="UniProtKB-UniRule"/>
</dbReference>
<dbReference type="GO" id="GO:0016114">
    <property type="term" value="P:terpenoid biosynthetic process"/>
    <property type="evidence" value="ECO:0007669"/>
    <property type="project" value="UniProtKB-UniRule"/>
</dbReference>
<dbReference type="CDD" id="cd13944">
    <property type="entry name" value="lytB_ispH"/>
    <property type="match status" value="1"/>
</dbReference>
<dbReference type="Gene3D" id="3.40.50.11270">
    <property type="match status" value="1"/>
</dbReference>
<dbReference type="Gene3D" id="3.40.1010.20">
    <property type="entry name" value="4-hydroxy-3-methylbut-2-enyl diphosphate reductase, catalytic domain"/>
    <property type="match status" value="2"/>
</dbReference>
<dbReference type="HAMAP" id="MF_00191">
    <property type="entry name" value="IspH"/>
    <property type="match status" value="1"/>
</dbReference>
<dbReference type="InterPro" id="IPR003451">
    <property type="entry name" value="LytB/IspH"/>
</dbReference>
<dbReference type="NCBIfam" id="TIGR00216">
    <property type="entry name" value="ispH_lytB"/>
    <property type="match status" value="1"/>
</dbReference>
<dbReference type="NCBIfam" id="NF002187">
    <property type="entry name" value="PRK01045.1-1"/>
    <property type="match status" value="1"/>
</dbReference>
<dbReference type="PANTHER" id="PTHR30426">
    <property type="entry name" value="4-HYDROXY-3-METHYLBUT-2-ENYL DIPHOSPHATE REDUCTASE"/>
    <property type="match status" value="1"/>
</dbReference>
<dbReference type="PANTHER" id="PTHR30426:SF0">
    <property type="entry name" value="4-HYDROXY-3-METHYLBUT-2-ENYL DIPHOSPHATE REDUCTASE"/>
    <property type="match status" value="1"/>
</dbReference>
<dbReference type="Pfam" id="PF02401">
    <property type="entry name" value="LYTB"/>
    <property type="match status" value="1"/>
</dbReference>
<name>ISPH_HELHP</name>
<accession>Q7VJV5</accession>
<keyword id="KW-0004">4Fe-4S</keyword>
<keyword id="KW-0408">Iron</keyword>
<keyword id="KW-0411">Iron-sulfur</keyword>
<keyword id="KW-0414">Isoprene biosynthesis</keyword>
<keyword id="KW-0479">Metal-binding</keyword>
<keyword id="KW-0560">Oxidoreductase</keyword>
<keyword id="KW-1185">Reference proteome</keyword>
<gene>
    <name evidence="1" type="primary">ispH</name>
    <name type="synonym">lytB</name>
    <name type="ordered locus">HH_0138</name>
</gene>
<comment type="function">
    <text evidence="1">Catalyzes the conversion of 1-hydroxy-2-methyl-2-(E)-butenyl 4-diphosphate (HMBPP) into a mixture of isopentenyl diphosphate (IPP) and dimethylallyl diphosphate (DMAPP). Acts in the terminal step of the DOXP/MEP pathway for isoprenoid precursor biosynthesis.</text>
</comment>
<comment type="catalytic activity">
    <reaction evidence="1">
        <text>isopentenyl diphosphate + 2 oxidized [2Fe-2S]-[ferredoxin] + H2O = (2E)-4-hydroxy-3-methylbut-2-enyl diphosphate + 2 reduced [2Fe-2S]-[ferredoxin] + 2 H(+)</text>
        <dbReference type="Rhea" id="RHEA:24488"/>
        <dbReference type="Rhea" id="RHEA-COMP:10000"/>
        <dbReference type="Rhea" id="RHEA-COMP:10001"/>
        <dbReference type="ChEBI" id="CHEBI:15377"/>
        <dbReference type="ChEBI" id="CHEBI:15378"/>
        <dbReference type="ChEBI" id="CHEBI:33737"/>
        <dbReference type="ChEBI" id="CHEBI:33738"/>
        <dbReference type="ChEBI" id="CHEBI:128753"/>
        <dbReference type="ChEBI" id="CHEBI:128769"/>
        <dbReference type="EC" id="1.17.7.4"/>
    </reaction>
</comment>
<comment type="catalytic activity">
    <reaction evidence="1">
        <text>dimethylallyl diphosphate + 2 oxidized [2Fe-2S]-[ferredoxin] + H2O = (2E)-4-hydroxy-3-methylbut-2-enyl diphosphate + 2 reduced [2Fe-2S]-[ferredoxin] + 2 H(+)</text>
        <dbReference type="Rhea" id="RHEA:24825"/>
        <dbReference type="Rhea" id="RHEA-COMP:10000"/>
        <dbReference type="Rhea" id="RHEA-COMP:10001"/>
        <dbReference type="ChEBI" id="CHEBI:15377"/>
        <dbReference type="ChEBI" id="CHEBI:15378"/>
        <dbReference type="ChEBI" id="CHEBI:33737"/>
        <dbReference type="ChEBI" id="CHEBI:33738"/>
        <dbReference type="ChEBI" id="CHEBI:57623"/>
        <dbReference type="ChEBI" id="CHEBI:128753"/>
        <dbReference type="EC" id="1.17.7.4"/>
    </reaction>
</comment>
<comment type="cofactor">
    <cofactor evidence="1">
        <name>[4Fe-4S] cluster</name>
        <dbReference type="ChEBI" id="CHEBI:49883"/>
    </cofactor>
    <text evidence="1">Binds 1 [4Fe-4S] cluster per subunit.</text>
</comment>
<comment type="pathway">
    <text evidence="1">Isoprenoid biosynthesis; dimethylallyl diphosphate biosynthesis; dimethylallyl diphosphate from (2E)-4-hydroxy-3-methylbutenyl diphosphate: step 1/1.</text>
</comment>
<comment type="pathway">
    <text evidence="1">Isoprenoid biosynthesis; isopentenyl diphosphate biosynthesis via DXP pathway; isopentenyl diphosphate from 1-deoxy-D-xylulose 5-phosphate: step 6/6.</text>
</comment>
<comment type="similarity">
    <text evidence="1">Belongs to the IspH family.</text>
</comment>
<protein>
    <recommendedName>
        <fullName evidence="1">4-hydroxy-3-methylbut-2-enyl diphosphate reductase</fullName>
        <shortName evidence="1">HMBPP reductase</shortName>
        <ecNumber evidence="1">1.17.7.4</ecNumber>
    </recommendedName>
</protein>
<reference key="1">
    <citation type="journal article" date="2003" name="Proc. Natl. Acad. Sci. U.S.A.">
        <title>The complete genome sequence of the carcinogenic bacterium Helicobacter hepaticus.</title>
        <authorList>
            <person name="Suerbaum S."/>
            <person name="Josenhans C."/>
            <person name="Sterzenbach T."/>
            <person name="Drescher B."/>
            <person name="Brandt P."/>
            <person name="Bell M."/>
            <person name="Droege M."/>
            <person name="Fartmann B."/>
            <person name="Fischer H.-P."/>
            <person name="Ge Z."/>
            <person name="Hoerster A."/>
            <person name="Holland R."/>
            <person name="Klein K."/>
            <person name="Koenig J."/>
            <person name="Macko L."/>
            <person name="Mendz G.L."/>
            <person name="Nyakatura G."/>
            <person name="Schauer D.B."/>
            <person name="Shen Z."/>
            <person name="Weber J."/>
            <person name="Frosch M."/>
            <person name="Fox J.G."/>
        </authorList>
    </citation>
    <scope>NUCLEOTIDE SEQUENCE [LARGE SCALE GENOMIC DNA]</scope>
    <source>
        <strain>ATCC 51449 / 3B1</strain>
    </source>
</reference>
<feature type="chain" id="PRO_0000128825" description="4-hydroxy-3-methylbut-2-enyl diphosphate reductase">
    <location>
        <begin position="1"/>
        <end position="273"/>
    </location>
</feature>
<feature type="active site" description="Proton donor" evidence="1">
    <location>
        <position position="122"/>
    </location>
</feature>
<feature type="binding site" evidence="1">
    <location>
        <position position="12"/>
    </location>
    <ligand>
        <name>[4Fe-4S] cluster</name>
        <dbReference type="ChEBI" id="CHEBI:49883"/>
    </ligand>
</feature>
<feature type="binding site" evidence="1">
    <location>
        <position position="36"/>
    </location>
    <ligand>
        <name>(2E)-4-hydroxy-3-methylbut-2-enyl diphosphate</name>
        <dbReference type="ChEBI" id="CHEBI:128753"/>
    </ligand>
</feature>
<feature type="binding site" evidence="1">
    <location>
        <position position="36"/>
    </location>
    <ligand>
        <name>dimethylallyl diphosphate</name>
        <dbReference type="ChEBI" id="CHEBI:57623"/>
    </ligand>
</feature>
<feature type="binding site" evidence="1">
    <location>
        <position position="36"/>
    </location>
    <ligand>
        <name>isopentenyl diphosphate</name>
        <dbReference type="ChEBI" id="CHEBI:128769"/>
    </ligand>
</feature>
<feature type="binding site" evidence="1">
    <location>
        <position position="70"/>
    </location>
    <ligand>
        <name>(2E)-4-hydroxy-3-methylbut-2-enyl diphosphate</name>
        <dbReference type="ChEBI" id="CHEBI:128753"/>
    </ligand>
</feature>
<feature type="binding site" evidence="1">
    <location>
        <position position="70"/>
    </location>
    <ligand>
        <name>dimethylallyl diphosphate</name>
        <dbReference type="ChEBI" id="CHEBI:57623"/>
    </ligand>
</feature>
<feature type="binding site" evidence="1">
    <location>
        <position position="70"/>
    </location>
    <ligand>
        <name>isopentenyl diphosphate</name>
        <dbReference type="ChEBI" id="CHEBI:128769"/>
    </ligand>
</feature>
<feature type="binding site" evidence="1">
    <location>
        <position position="92"/>
    </location>
    <ligand>
        <name>[4Fe-4S] cluster</name>
        <dbReference type="ChEBI" id="CHEBI:49883"/>
    </ligand>
</feature>
<feature type="binding site" evidence="1">
    <location>
        <position position="120"/>
    </location>
    <ligand>
        <name>(2E)-4-hydroxy-3-methylbut-2-enyl diphosphate</name>
        <dbReference type="ChEBI" id="CHEBI:128753"/>
    </ligand>
</feature>
<feature type="binding site" evidence="1">
    <location>
        <position position="120"/>
    </location>
    <ligand>
        <name>dimethylallyl diphosphate</name>
        <dbReference type="ChEBI" id="CHEBI:57623"/>
    </ligand>
</feature>
<feature type="binding site" evidence="1">
    <location>
        <position position="120"/>
    </location>
    <ligand>
        <name>isopentenyl diphosphate</name>
        <dbReference type="ChEBI" id="CHEBI:128769"/>
    </ligand>
</feature>
<feature type="binding site" evidence="1">
    <location>
        <position position="157"/>
    </location>
    <ligand>
        <name>(2E)-4-hydroxy-3-methylbut-2-enyl diphosphate</name>
        <dbReference type="ChEBI" id="CHEBI:128753"/>
    </ligand>
</feature>
<feature type="binding site" evidence="1">
    <location>
        <position position="185"/>
    </location>
    <ligand>
        <name>[4Fe-4S] cluster</name>
        <dbReference type="ChEBI" id="CHEBI:49883"/>
    </ligand>
</feature>
<feature type="binding site" evidence="1">
    <location>
        <position position="213"/>
    </location>
    <ligand>
        <name>(2E)-4-hydroxy-3-methylbut-2-enyl diphosphate</name>
        <dbReference type="ChEBI" id="CHEBI:128753"/>
    </ligand>
</feature>
<feature type="binding site" evidence="1">
    <location>
        <position position="213"/>
    </location>
    <ligand>
        <name>dimethylallyl diphosphate</name>
        <dbReference type="ChEBI" id="CHEBI:57623"/>
    </ligand>
</feature>
<feature type="binding site" evidence="1">
    <location>
        <position position="213"/>
    </location>
    <ligand>
        <name>isopentenyl diphosphate</name>
        <dbReference type="ChEBI" id="CHEBI:128769"/>
    </ligand>
</feature>
<feature type="binding site" evidence="1">
    <location>
        <position position="214"/>
    </location>
    <ligand>
        <name>(2E)-4-hydroxy-3-methylbut-2-enyl diphosphate</name>
        <dbReference type="ChEBI" id="CHEBI:128753"/>
    </ligand>
</feature>
<feature type="binding site" evidence="1">
    <location>
        <position position="214"/>
    </location>
    <ligand>
        <name>dimethylallyl diphosphate</name>
        <dbReference type="ChEBI" id="CHEBI:57623"/>
    </ligand>
</feature>
<feature type="binding site" evidence="1">
    <location>
        <position position="214"/>
    </location>
    <ligand>
        <name>isopentenyl diphosphate</name>
        <dbReference type="ChEBI" id="CHEBI:128769"/>
    </ligand>
</feature>
<feature type="binding site" evidence="1">
    <location>
        <position position="215"/>
    </location>
    <ligand>
        <name>(2E)-4-hydroxy-3-methylbut-2-enyl diphosphate</name>
        <dbReference type="ChEBI" id="CHEBI:128753"/>
    </ligand>
</feature>
<feature type="binding site" evidence="1">
    <location>
        <position position="215"/>
    </location>
    <ligand>
        <name>dimethylallyl diphosphate</name>
        <dbReference type="ChEBI" id="CHEBI:57623"/>
    </ligand>
</feature>
<feature type="binding site" evidence="1">
    <location>
        <position position="215"/>
    </location>
    <ligand>
        <name>isopentenyl diphosphate</name>
        <dbReference type="ChEBI" id="CHEBI:128769"/>
    </ligand>
</feature>
<feature type="binding site" evidence="1">
    <location>
        <position position="257"/>
    </location>
    <ligand>
        <name>(2E)-4-hydroxy-3-methylbut-2-enyl diphosphate</name>
        <dbReference type="ChEBI" id="CHEBI:128753"/>
    </ligand>
</feature>
<feature type="binding site" evidence="1">
    <location>
        <position position="257"/>
    </location>
    <ligand>
        <name>dimethylallyl diphosphate</name>
        <dbReference type="ChEBI" id="CHEBI:57623"/>
    </ligand>
</feature>
<feature type="binding site" evidence="1">
    <location>
        <position position="257"/>
    </location>
    <ligand>
        <name>isopentenyl diphosphate</name>
        <dbReference type="ChEBI" id="CHEBI:128769"/>
    </ligand>
</feature>
<sequence>MKVKFAKKYGFCFGVKRAIRIAERNQHATTFGPLIHNSREIERLQKDFDVSLSRSLEEAQKFKSVIVRTHGITKDDLQVLKEHHTHIIDATCPFVTKPQQIVEKMSQEGYQIIIFGDNSHPEVKGVASYGDDVAIIANIDELKHLTLKKKVALVSQTTKQPEHFGKIAALLVSLVNECRIFNTICSATFENQFAVDELSREADIMVIVGGKNSSNTKQLFKIAKEYCTDSYLIEDENEIDNTWFVGKELCGITAGASTPDWIISRVQEKIEQI</sequence>
<proteinExistence type="inferred from homology"/>